<comment type="function">
    <text evidence="1">Catalyzes the conversion of glucosamine-6-phosphate to glucosamine-1-phosphate.</text>
</comment>
<comment type="catalytic activity">
    <reaction evidence="1">
        <text>alpha-D-glucosamine 1-phosphate = D-glucosamine 6-phosphate</text>
        <dbReference type="Rhea" id="RHEA:23424"/>
        <dbReference type="ChEBI" id="CHEBI:58516"/>
        <dbReference type="ChEBI" id="CHEBI:58725"/>
        <dbReference type="EC" id="5.4.2.10"/>
    </reaction>
</comment>
<comment type="cofactor">
    <cofactor evidence="1">
        <name>Mg(2+)</name>
        <dbReference type="ChEBI" id="CHEBI:18420"/>
    </cofactor>
    <text evidence="1">Binds 1 Mg(2+) ion per subunit.</text>
</comment>
<comment type="PTM">
    <text evidence="1">Activated by phosphorylation.</text>
</comment>
<comment type="similarity">
    <text evidence="1">Belongs to the phosphohexose mutase family.</text>
</comment>
<comment type="sequence caution" evidence="2">
    <conflict type="erroneous initiation">
        <sequence resource="EMBL-CDS" id="ABS13941"/>
    </conflict>
</comment>
<gene>
    <name evidence="1" type="primary">glmM</name>
    <name type="ordered locus">Oant_1224</name>
</gene>
<sequence length="451" mass="48571">MTRKYFGTDGIRGQANSFPMTPEVAMKVGMAVGHIFRRKGQTSRVVIGKDTRRSGYMLENALVAGFTAAGMDVFLLGPIPTPAVAMLCRSLRADIGVMISASHNPFYDNGIKLFGPDGFKLSDEIELKIEAMIDGDLTPYLASHGDVGRAKRVDGDIYRYIEFAKRTLPRNIDLNGLRIVVDCANGAGYKVAPAALWELGAEVITINNEPNGININEDCGSTHPIGLMKKVHEVRADVGIALDGDADRVLLVDENGTVIDGDQLMAVIAESWAASDRLEGGGIVATVMSNLGLERFLADRHLTLARTKVGDRYVVEHMREHGFNVGGEQSGHIVLSDYATTGDGLISALQILAVAQEQGKPISEICRKFDPVPQLLKNVRTSGGKPLENKRVKSAIDEATERLGVQGRLVIRPSGTEPLIRVMAEGDDRGLVEKVVNDIIDVISSEGSAAA</sequence>
<proteinExistence type="inferred from homology"/>
<dbReference type="EC" id="5.4.2.10" evidence="1"/>
<dbReference type="EMBL" id="CP000758">
    <property type="protein sequence ID" value="ABS13941.1"/>
    <property type="status" value="ALT_INIT"/>
    <property type="molecule type" value="Genomic_DNA"/>
</dbReference>
<dbReference type="SMR" id="A6WY87"/>
<dbReference type="STRING" id="439375.Oant_1224"/>
<dbReference type="KEGG" id="oan:Oant_1224"/>
<dbReference type="eggNOG" id="COG1109">
    <property type="taxonomic scope" value="Bacteria"/>
</dbReference>
<dbReference type="HOGENOM" id="CLU_016950_7_0_5"/>
<dbReference type="PhylomeDB" id="A6WY87"/>
<dbReference type="Proteomes" id="UP000002301">
    <property type="component" value="Chromosome 1"/>
</dbReference>
<dbReference type="GO" id="GO:0005829">
    <property type="term" value="C:cytosol"/>
    <property type="evidence" value="ECO:0007669"/>
    <property type="project" value="TreeGrafter"/>
</dbReference>
<dbReference type="GO" id="GO:0000287">
    <property type="term" value="F:magnesium ion binding"/>
    <property type="evidence" value="ECO:0007669"/>
    <property type="project" value="UniProtKB-UniRule"/>
</dbReference>
<dbReference type="GO" id="GO:0008966">
    <property type="term" value="F:phosphoglucosamine mutase activity"/>
    <property type="evidence" value="ECO:0007669"/>
    <property type="project" value="UniProtKB-UniRule"/>
</dbReference>
<dbReference type="GO" id="GO:0004615">
    <property type="term" value="F:phosphomannomutase activity"/>
    <property type="evidence" value="ECO:0007669"/>
    <property type="project" value="TreeGrafter"/>
</dbReference>
<dbReference type="GO" id="GO:0005975">
    <property type="term" value="P:carbohydrate metabolic process"/>
    <property type="evidence" value="ECO:0007669"/>
    <property type="project" value="InterPro"/>
</dbReference>
<dbReference type="GO" id="GO:0009252">
    <property type="term" value="P:peptidoglycan biosynthetic process"/>
    <property type="evidence" value="ECO:0007669"/>
    <property type="project" value="TreeGrafter"/>
</dbReference>
<dbReference type="GO" id="GO:0006048">
    <property type="term" value="P:UDP-N-acetylglucosamine biosynthetic process"/>
    <property type="evidence" value="ECO:0007669"/>
    <property type="project" value="TreeGrafter"/>
</dbReference>
<dbReference type="CDD" id="cd05802">
    <property type="entry name" value="GlmM"/>
    <property type="match status" value="1"/>
</dbReference>
<dbReference type="FunFam" id="3.30.310.50:FF:000001">
    <property type="entry name" value="Phosphoglucosamine mutase"/>
    <property type="match status" value="1"/>
</dbReference>
<dbReference type="FunFam" id="3.40.120.10:FF:000001">
    <property type="entry name" value="Phosphoglucosamine mutase"/>
    <property type="match status" value="1"/>
</dbReference>
<dbReference type="FunFam" id="3.40.120.10:FF:000003">
    <property type="entry name" value="Phosphoglucosamine mutase"/>
    <property type="match status" value="1"/>
</dbReference>
<dbReference type="Gene3D" id="3.40.120.10">
    <property type="entry name" value="Alpha-D-Glucose-1,6-Bisphosphate, subunit A, domain 3"/>
    <property type="match status" value="3"/>
</dbReference>
<dbReference type="Gene3D" id="3.30.310.50">
    <property type="entry name" value="Alpha-D-phosphohexomutase, C-terminal domain"/>
    <property type="match status" value="1"/>
</dbReference>
<dbReference type="HAMAP" id="MF_01554_B">
    <property type="entry name" value="GlmM_B"/>
    <property type="match status" value="1"/>
</dbReference>
<dbReference type="InterPro" id="IPR005844">
    <property type="entry name" value="A-D-PHexomutase_a/b/a-I"/>
</dbReference>
<dbReference type="InterPro" id="IPR016055">
    <property type="entry name" value="A-D-PHexomutase_a/b/a-I/II/III"/>
</dbReference>
<dbReference type="InterPro" id="IPR005845">
    <property type="entry name" value="A-D-PHexomutase_a/b/a-II"/>
</dbReference>
<dbReference type="InterPro" id="IPR005846">
    <property type="entry name" value="A-D-PHexomutase_a/b/a-III"/>
</dbReference>
<dbReference type="InterPro" id="IPR005843">
    <property type="entry name" value="A-D-PHexomutase_C"/>
</dbReference>
<dbReference type="InterPro" id="IPR036900">
    <property type="entry name" value="A-D-PHexomutase_C_sf"/>
</dbReference>
<dbReference type="InterPro" id="IPR016066">
    <property type="entry name" value="A-D-PHexomutase_CS"/>
</dbReference>
<dbReference type="InterPro" id="IPR005841">
    <property type="entry name" value="Alpha-D-phosphohexomutase_SF"/>
</dbReference>
<dbReference type="InterPro" id="IPR006352">
    <property type="entry name" value="GlmM_bact"/>
</dbReference>
<dbReference type="InterPro" id="IPR050060">
    <property type="entry name" value="Phosphoglucosamine_mutase"/>
</dbReference>
<dbReference type="NCBIfam" id="TIGR01455">
    <property type="entry name" value="glmM"/>
    <property type="match status" value="1"/>
</dbReference>
<dbReference type="NCBIfam" id="NF008139">
    <property type="entry name" value="PRK10887.1"/>
    <property type="match status" value="1"/>
</dbReference>
<dbReference type="PANTHER" id="PTHR42946:SF1">
    <property type="entry name" value="PHOSPHOGLUCOMUTASE (ALPHA-D-GLUCOSE-1,6-BISPHOSPHATE-DEPENDENT)"/>
    <property type="match status" value="1"/>
</dbReference>
<dbReference type="PANTHER" id="PTHR42946">
    <property type="entry name" value="PHOSPHOHEXOSE MUTASE"/>
    <property type="match status" value="1"/>
</dbReference>
<dbReference type="Pfam" id="PF02878">
    <property type="entry name" value="PGM_PMM_I"/>
    <property type="match status" value="1"/>
</dbReference>
<dbReference type="Pfam" id="PF02879">
    <property type="entry name" value="PGM_PMM_II"/>
    <property type="match status" value="1"/>
</dbReference>
<dbReference type="Pfam" id="PF02880">
    <property type="entry name" value="PGM_PMM_III"/>
    <property type="match status" value="1"/>
</dbReference>
<dbReference type="Pfam" id="PF00408">
    <property type="entry name" value="PGM_PMM_IV"/>
    <property type="match status" value="1"/>
</dbReference>
<dbReference type="PRINTS" id="PR00509">
    <property type="entry name" value="PGMPMM"/>
</dbReference>
<dbReference type="SUPFAM" id="SSF55957">
    <property type="entry name" value="Phosphoglucomutase, C-terminal domain"/>
    <property type="match status" value="1"/>
</dbReference>
<dbReference type="SUPFAM" id="SSF53738">
    <property type="entry name" value="Phosphoglucomutase, first 3 domains"/>
    <property type="match status" value="3"/>
</dbReference>
<dbReference type="PROSITE" id="PS00710">
    <property type="entry name" value="PGM_PMM"/>
    <property type="match status" value="1"/>
</dbReference>
<keyword id="KW-0413">Isomerase</keyword>
<keyword id="KW-0460">Magnesium</keyword>
<keyword id="KW-0479">Metal-binding</keyword>
<keyword id="KW-0597">Phosphoprotein</keyword>
<keyword id="KW-1185">Reference proteome</keyword>
<protein>
    <recommendedName>
        <fullName evidence="1">Phosphoglucosamine mutase</fullName>
        <ecNumber evidence="1">5.4.2.10</ecNumber>
    </recommendedName>
</protein>
<accession>A6WY87</accession>
<name>GLMM_BRUA4</name>
<organism>
    <name type="scientific">Brucella anthropi (strain ATCC 49188 / DSM 6882 / CCUG 24695 / JCM 21032 / LMG 3331 / NBRC 15819 / NCTC 12168 / Alc 37)</name>
    <name type="common">Ochrobactrum anthropi</name>
    <dbReference type="NCBI Taxonomy" id="439375"/>
    <lineage>
        <taxon>Bacteria</taxon>
        <taxon>Pseudomonadati</taxon>
        <taxon>Pseudomonadota</taxon>
        <taxon>Alphaproteobacteria</taxon>
        <taxon>Hyphomicrobiales</taxon>
        <taxon>Brucellaceae</taxon>
        <taxon>Brucella/Ochrobactrum group</taxon>
        <taxon>Brucella</taxon>
    </lineage>
</organism>
<evidence type="ECO:0000255" key="1">
    <source>
        <dbReference type="HAMAP-Rule" id="MF_01554"/>
    </source>
</evidence>
<evidence type="ECO:0000305" key="2"/>
<feature type="chain" id="PRO_0000318619" description="Phosphoglucosamine mutase">
    <location>
        <begin position="1"/>
        <end position="451"/>
    </location>
</feature>
<feature type="active site" description="Phosphoserine intermediate" evidence="1">
    <location>
        <position position="102"/>
    </location>
</feature>
<feature type="binding site" description="via phosphate group" evidence="1">
    <location>
        <position position="102"/>
    </location>
    <ligand>
        <name>Mg(2+)</name>
        <dbReference type="ChEBI" id="CHEBI:18420"/>
    </ligand>
</feature>
<feature type="binding site" evidence="1">
    <location>
        <position position="243"/>
    </location>
    <ligand>
        <name>Mg(2+)</name>
        <dbReference type="ChEBI" id="CHEBI:18420"/>
    </ligand>
</feature>
<feature type="binding site" evidence="1">
    <location>
        <position position="245"/>
    </location>
    <ligand>
        <name>Mg(2+)</name>
        <dbReference type="ChEBI" id="CHEBI:18420"/>
    </ligand>
</feature>
<feature type="binding site" evidence="1">
    <location>
        <position position="247"/>
    </location>
    <ligand>
        <name>Mg(2+)</name>
        <dbReference type="ChEBI" id="CHEBI:18420"/>
    </ligand>
</feature>
<feature type="modified residue" description="Phosphoserine" evidence="1">
    <location>
        <position position="102"/>
    </location>
</feature>
<reference key="1">
    <citation type="journal article" date="2011" name="J. Bacteriol.">
        <title>Genome of Ochrobactrum anthropi ATCC 49188 T, a versatile opportunistic pathogen and symbiont of several eukaryotic hosts.</title>
        <authorList>
            <person name="Chain P.S."/>
            <person name="Lang D.M."/>
            <person name="Comerci D.J."/>
            <person name="Malfatti S.A."/>
            <person name="Vergez L.M."/>
            <person name="Shin M."/>
            <person name="Ugalde R.A."/>
            <person name="Garcia E."/>
            <person name="Tolmasky M.E."/>
        </authorList>
    </citation>
    <scope>NUCLEOTIDE SEQUENCE [LARGE SCALE GENOMIC DNA]</scope>
    <source>
        <strain>ATCC 49188 / DSM 6882 / CCUG 24695 / JCM 21032 / LMG 3331 / NBRC 15819 / NCTC 12168 / Alc 37</strain>
    </source>
</reference>